<organism>
    <name type="scientific">Aspergillus terreus (strain NIH 2624 / FGSC A1156)</name>
    <dbReference type="NCBI Taxonomy" id="341663"/>
    <lineage>
        <taxon>Eukaryota</taxon>
        <taxon>Fungi</taxon>
        <taxon>Dikarya</taxon>
        <taxon>Ascomycota</taxon>
        <taxon>Pezizomycotina</taxon>
        <taxon>Eurotiomycetes</taxon>
        <taxon>Eurotiomycetidae</taxon>
        <taxon>Eurotiales</taxon>
        <taxon>Aspergillaceae</taxon>
        <taxon>Aspergillus</taxon>
        <taxon>Aspergillus subgen. Circumdati</taxon>
    </lineage>
</organism>
<name>MCR1_ASPTN</name>
<proteinExistence type="inferred from homology"/>
<keyword id="KW-0274">FAD</keyword>
<keyword id="KW-0285">Flavoprotein</keyword>
<keyword id="KW-0472">Membrane</keyword>
<keyword id="KW-0496">Mitochondrion</keyword>
<keyword id="KW-1000">Mitochondrion outer membrane</keyword>
<keyword id="KW-0520">NAD</keyword>
<keyword id="KW-0560">Oxidoreductase</keyword>
<keyword id="KW-1185">Reference proteome</keyword>
<keyword id="KW-0812">Transmembrane</keyword>
<keyword id="KW-1133">Transmembrane helix</keyword>
<accession>Q0CRD8</accession>
<protein>
    <recommendedName>
        <fullName>NADH-cytochrome b5 reductase 2</fullName>
        <ecNumber>1.6.2.2</ecNumber>
    </recommendedName>
    <alternativeName>
        <fullName>Mitochondrial cytochrome b reductase</fullName>
    </alternativeName>
</protein>
<comment type="function">
    <text evidence="1">May mediate the reduction of outer membrane cytochrome b5.</text>
</comment>
<comment type="catalytic activity">
    <reaction>
        <text>2 Fe(III)-[cytochrome b5] + NADH = 2 Fe(II)-[cytochrome b5] + NAD(+) + H(+)</text>
        <dbReference type="Rhea" id="RHEA:46680"/>
        <dbReference type="Rhea" id="RHEA-COMP:10438"/>
        <dbReference type="Rhea" id="RHEA-COMP:10439"/>
        <dbReference type="ChEBI" id="CHEBI:15378"/>
        <dbReference type="ChEBI" id="CHEBI:29033"/>
        <dbReference type="ChEBI" id="CHEBI:29034"/>
        <dbReference type="ChEBI" id="CHEBI:57540"/>
        <dbReference type="ChEBI" id="CHEBI:57945"/>
        <dbReference type="EC" id="1.6.2.2"/>
    </reaction>
</comment>
<comment type="cofactor">
    <cofactor evidence="1">
        <name>FAD</name>
        <dbReference type="ChEBI" id="CHEBI:57692"/>
    </cofactor>
</comment>
<comment type="subcellular location">
    <subcellularLocation>
        <location evidence="1">Mitochondrion outer membrane</location>
        <topology evidence="1">Single-pass membrane protein</topology>
    </subcellularLocation>
</comment>
<comment type="similarity">
    <text evidence="4">Belongs to the flavoprotein pyridine nucleotide cytochrome reductase family.</text>
</comment>
<comment type="sequence caution" evidence="4">
    <conflict type="erroneous gene model prediction">
        <sequence resource="EMBL-CDS" id="EAU35548"/>
    </conflict>
</comment>
<reference key="1">
    <citation type="submission" date="2005-09" db="EMBL/GenBank/DDBJ databases">
        <title>Annotation of the Aspergillus terreus NIH2624 genome.</title>
        <authorList>
            <person name="Birren B.W."/>
            <person name="Lander E.S."/>
            <person name="Galagan J.E."/>
            <person name="Nusbaum C."/>
            <person name="Devon K."/>
            <person name="Henn M."/>
            <person name="Ma L.-J."/>
            <person name="Jaffe D.B."/>
            <person name="Butler J."/>
            <person name="Alvarez P."/>
            <person name="Gnerre S."/>
            <person name="Grabherr M."/>
            <person name="Kleber M."/>
            <person name="Mauceli E.W."/>
            <person name="Brockman W."/>
            <person name="Rounsley S."/>
            <person name="Young S.K."/>
            <person name="LaButti K."/>
            <person name="Pushparaj V."/>
            <person name="DeCaprio D."/>
            <person name="Crawford M."/>
            <person name="Koehrsen M."/>
            <person name="Engels R."/>
            <person name="Montgomery P."/>
            <person name="Pearson M."/>
            <person name="Howarth C."/>
            <person name="Larson L."/>
            <person name="Luoma S."/>
            <person name="White J."/>
            <person name="Alvarado L."/>
            <person name="Kodira C.D."/>
            <person name="Zeng Q."/>
            <person name="Oleary S."/>
            <person name="Yandava C."/>
            <person name="Denning D.W."/>
            <person name="Nierman W.C."/>
            <person name="Milne T."/>
            <person name="Madden K."/>
        </authorList>
    </citation>
    <scope>NUCLEOTIDE SEQUENCE [LARGE SCALE GENOMIC DNA]</scope>
    <source>
        <strain>NIH 2624 / FGSC A1156</strain>
    </source>
</reference>
<evidence type="ECO:0000250" key="1"/>
<evidence type="ECO:0000255" key="2"/>
<evidence type="ECO:0000255" key="3">
    <source>
        <dbReference type="PROSITE-ProRule" id="PRU00716"/>
    </source>
</evidence>
<evidence type="ECO:0000305" key="4"/>
<dbReference type="EC" id="1.6.2.2"/>
<dbReference type="EMBL" id="CH476598">
    <property type="protein sequence ID" value="EAU35548.1"/>
    <property type="status" value="ALT_SEQ"/>
    <property type="molecule type" value="Genomic_DNA"/>
</dbReference>
<dbReference type="RefSeq" id="XP_001212924.1">
    <property type="nucleotide sequence ID" value="XM_001212924.1"/>
</dbReference>
<dbReference type="SMR" id="Q0CRD8"/>
<dbReference type="STRING" id="341663.Q0CRD8"/>
<dbReference type="GeneID" id="4318618"/>
<dbReference type="eggNOG" id="KOG0534">
    <property type="taxonomic scope" value="Eukaryota"/>
</dbReference>
<dbReference type="OrthoDB" id="432685at2759"/>
<dbReference type="Proteomes" id="UP000007963">
    <property type="component" value="Unassembled WGS sequence"/>
</dbReference>
<dbReference type="GO" id="GO:0005741">
    <property type="term" value="C:mitochondrial outer membrane"/>
    <property type="evidence" value="ECO:0007669"/>
    <property type="project" value="UniProtKB-SubCell"/>
</dbReference>
<dbReference type="GO" id="GO:0004128">
    <property type="term" value="F:cytochrome-b5 reductase activity, acting on NAD(P)H"/>
    <property type="evidence" value="ECO:0007669"/>
    <property type="project" value="UniProtKB-EC"/>
</dbReference>
<dbReference type="GO" id="GO:0006696">
    <property type="term" value="P:ergosterol biosynthetic process"/>
    <property type="evidence" value="ECO:0007669"/>
    <property type="project" value="TreeGrafter"/>
</dbReference>
<dbReference type="CDD" id="cd06183">
    <property type="entry name" value="cyt_b5_reduct_like"/>
    <property type="match status" value="1"/>
</dbReference>
<dbReference type="FunFam" id="2.40.30.10:FF:000032">
    <property type="entry name" value="NADH-cytochrome b5 reductase"/>
    <property type="match status" value="1"/>
</dbReference>
<dbReference type="FunFam" id="3.40.50.80:FF:000009">
    <property type="entry name" value="NADH-cytochrome b5 reductase"/>
    <property type="match status" value="1"/>
</dbReference>
<dbReference type="Gene3D" id="3.40.50.80">
    <property type="entry name" value="Nucleotide-binding domain of ferredoxin-NADP reductase (FNR) module"/>
    <property type="match status" value="1"/>
</dbReference>
<dbReference type="Gene3D" id="2.40.30.10">
    <property type="entry name" value="Translation factors"/>
    <property type="match status" value="1"/>
</dbReference>
<dbReference type="InterPro" id="IPR001834">
    <property type="entry name" value="CBR-like"/>
</dbReference>
<dbReference type="InterPro" id="IPR008333">
    <property type="entry name" value="Cbr1-like_FAD-bd_dom"/>
</dbReference>
<dbReference type="InterPro" id="IPR017927">
    <property type="entry name" value="FAD-bd_FR_type"/>
</dbReference>
<dbReference type="InterPro" id="IPR001709">
    <property type="entry name" value="Flavoprot_Pyr_Nucl_cyt_Rdtase"/>
</dbReference>
<dbReference type="InterPro" id="IPR039261">
    <property type="entry name" value="FNR_nucleotide-bd"/>
</dbReference>
<dbReference type="InterPro" id="IPR001433">
    <property type="entry name" value="OxRdtase_FAD/NAD-bd"/>
</dbReference>
<dbReference type="InterPro" id="IPR017938">
    <property type="entry name" value="Riboflavin_synthase-like_b-brl"/>
</dbReference>
<dbReference type="PANTHER" id="PTHR19370">
    <property type="entry name" value="NADH-CYTOCHROME B5 REDUCTASE"/>
    <property type="match status" value="1"/>
</dbReference>
<dbReference type="PANTHER" id="PTHR19370:SF171">
    <property type="entry name" value="NADH-CYTOCHROME B5 REDUCTASE 2"/>
    <property type="match status" value="1"/>
</dbReference>
<dbReference type="Pfam" id="PF00970">
    <property type="entry name" value="FAD_binding_6"/>
    <property type="match status" value="1"/>
</dbReference>
<dbReference type="Pfam" id="PF00175">
    <property type="entry name" value="NAD_binding_1"/>
    <property type="match status" value="1"/>
</dbReference>
<dbReference type="PRINTS" id="PR00406">
    <property type="entry name" value="CYTB5RDTASE"/>
</dbReference>
<dbReference type="PRINTS" id="PR00371">
    <property type="entry name" value="FPNCR"/>
</dbReference>
<dbReference type="SUPFAM" id="SSF52343">
    <property type="entry name" value="Ferredoxin reductase-like, C-terminal NADP-linked domain"/>
    <property type="match status" value="1"/>
</dbReference>
<dbReference type="SUPFAM" id="SSF63380">
    <property type="entry name" value="Riboflavin synthase domain-like"/>
    <property type="match status" value="1"/>
</dbReference>
<dbReference type="PROSITE" id="PS51384">
    <property type="entry name" value="FAD_FR"/>
    <property type="match status" value="1"/>
</dbReference>
<gene>
    <name type="primary">mcr1</name>
    <name type="ORF">ATEG_03746</name>
</gene>
<feature type="chain" id="PRO_0000330174" description="NADH-cytochrome b5 reductase 2">
    <location>
        <begin position="1"/>
        <end position="319"/>
    </location>
</feature>
<feature type="transmembrane region" description="Helical" evidence="2">
    <location>
        <begin position="30"/>
        <end position="46"/>
    </location>
</feature>
<feature type="domain" description="FAD-binding FR-type" evidence="3">
    <location>
        <begin position="69"/>
        <end position="173"/>
    </location>
</feature>
<feature type="binding site" evidence="1">
    <location>
        <begin position="176"/>
        <end position="211"/>
    </location>
    <ligand>
        <name>FAD</name>
        <dbReference type="ChEBI" id="CHEBI:57692"/>
    </ligand>
</feature>
<sequence>MFARQTFRYAQPLKQSFRKYSTEAPKGKSLAPVYLTVGLAGLGVGLYRYNSATAEAPAERAKVFTGGDQGWVDLKLSEIEVLNHNTKRFRFEFEDKEAVSGLNVASALLTKFKPEGGKAVLRPYTPVSDESQPGFLDLVVKVYPNGPMSEHLHSMNVDQRLEFKGPLPKYPWEANKHQHICLIAGGTGITPMYQLARHIFKNPEDKTKVTLVYGNVSEQDILLKKELEELENTYPQRFKAFYVLDNPPKEWTGGKGYISKELLKTVLPEPKEENIKIFVCGPPGLYKAISGNKVSPKDQGELTGILKELGYSQEQVFKF</sequence>